<proteinExistence type="inferred from homology"/>
<sequence>MIWHVQNENFILDSTRIFMKAFHLLLFHGSFIFPECILIFGLILLLMIDSTSDQKDIPWLYFISSTSLVMSITALLFRWREEPMISFSGNFQTNNFNEIFQFLILLCSTLCIPLSVEYIECTEMAITEFLLFVLTATLGGMFLCGANDLITIFVAPESFSLCSYLLSGYTKRDVRSNEATTKYLLMGGASSSILVHGFSWLYGSSGGEIELQEIVNGLINTQMYNSPGISIALISITVGIGFKLSPAPSHQWTPDVYEGSPTPVVAFLSVTSKVAASASATRIFDIPFYFSSNEWHLLLEILAILSMILGNLIAITQTSMKRMLAYSSIGQIGYVIIGIIVGDSNDGYASMITYMLFYISMNLGTFARIVSFGLRTGTDNIRDYAGLYTKDPFLALSSALCLLSLGGLPPLAGFFGKLHLFWCGWQAGLYFLVSIGLLTSVVSIYYYLKIIKLLMTGRNQEITPHVRNYRRSLLRSNNSIELSMIVCVIASTIPGISMNPIIAIAQDTLF</sequence>
<keyword id="KW-0150">Chloroplast</keyword>
<keyword id="KW-0472">Membrane</keyword>
<keyword id="KW-0520">NAD</keyword>
<keyword id="KW-0521">NADP</keyword>
<keyword id="KW-0934">Plastid</keyword>
<keyword id="KW-0618">Plastoquinone</keyword>
<keyword id="KW-0874">Quinone</keyword>
<keyword id="KW-0793">Thylakoid</keyword>
<keyword id="KW-1278">Translocase</keyword>
<keyword id="KW-0812">Transmembrane</keyword>
<keyword id="KW-1133">Transmembrane helix</keyword>
<keyword id="KW-0813">Transport</keyword>
<comment type="function">
    <text evidence="1">NDH shuttles electrons from NAD(P)H:plastoquinone, via FMN and iron-sulfur (Fe-S) centers, to quinones in the photosynthetic chain and possibly in a chloroplast respiratory chain. The immediate electron acceptor for the enzyme in this species is believed to be plastoquinone. Couples the redox reaction to proton translocation, and thus conserves the redox energy in a proton gradient.</text>
</comment>
<comment type="catalytic activity">
    <reaction evidence="1">
        <text>a plastoquinone + NADH + (n+1) H(+)(in) = a plastoquinol + NAD(+) + n H(+)(out)</text>
        <dbReference type="Rhea" id="RHEA:42608"/>
        <dbReference type="Rhea" id="RHEA-COMP:9561"/>
        <dbReference type="Rhea" id="RHEA-COMP:9562"/>
        <dbReference type="ChEBI" id="CHEBI:15378"/>
        <dbReference type="ChEBI" id="CHEBI:17757"/>
        <dbReference type="ChEBI" id="CHEBI:57540"/>
        <dbReference type="ChEBI" id="CHEBI:57945"/>
        <dbReference type="ChEBI" id="CHEBI:62192"/>
    </reaction>
</comment>
<comment type="catalytic activity">
    <reaction evidence="1">
        <text>a plastoquinone + NADPH + (n+1) H(+)(in) = a plastoquinol + NADP(+) + n H(+)(out)</text>
        <dbReference type="Rhea" id="RHEA:42612"/>
        <dbReference type="Rhea" id="RHEA-COMP:9561"/>
        <dbReference type="Rhea" id="RHEA-COMP:9562"/>
        <dbReference type="ChEBI" id="CHEBI:15378"/>
        <dbReference type="ChEBI" id="CHEBI:17757"/>
        <dbReference type="ChEBI" id="CHEBI:57783"/>
        <dbReference type="ChEBI" id="CHEBI:58349"/>
        <dbReference type="ChEBI" id="CHEBI:62192"/>
    </reaction>
</comment>
<comment type="subunit">
    <text evidence="1">NDH is composed of at least 16 different subunits, 5 of which are encoded in the nucleus.</text>
</comment>
<comment type="subcellular location">
    <subcellularLocation>
        <location evidence="1">Plastid</location>
        <location evidence="1">Chloroplast thylakoid membrane</location>
        <topology evidence="1">Multi-pass membrane protein</topology>
    </subcellularLocation>
</comment>
<comment type="similarity">
    <text evidence="1">Belongs to the complex I subunit 2 family.</text>
</comment>
<accession>P0CC38</accession>
<accession>Q7Y736</accession>
<evidence type="ECO:0000255" key="1">
    <source>
        <dbReference type="HAMAP-Rule" id="MF_00445"/>
    </source>
</evidence>
<dbReference type="EC" id="7.1.1.-" evidence="1"/>
<dbReference type="EMBL" id="AJ428413">
    <property type="protein sequence ID" value="CAD28766.1"/>
    <property type="molecule type" value="Genomic_DNA"/>
</dbReference>
<dbReference type="SMR" id="P0CC38"/>
<dbReference type="GO" id="GO:0009535">
    <property type="term" value="C:chloroplast thylakoid membrane"/>
    <property type="evidence" value="ECO:0007669"/>
    <property type="project" value="UniProtKB-SubCell"/>
</dbReference>
<dbReference type="GO" id="GO:0008137">
    <property type="term" value="F:NADH dehydrogenase (ubiquinone) activity"/>
    <property type="evidence" value="ECO:0007669"/>
    <property type="project" value="InterPro"/>
</dbReference>
<dbReference type="GO" id="GO:0048038">
    <property type="term" value="F:quinone binding"/>
    <property type="evidence" value="ECO:0007669"/>
    <property type="project" value="UniProtKB-KW"/>
</dbReference>
<dbReference type="GO" id="GO:0042773">
    <property type="term" value="P:ATP synthesis coupled electron transport"/>
    <property type="evidence" value="ECO:0007669"/>
    <property type="project" value="InterPro"/>
</dbReference>
<dbReference type="GO" id="GO:0019684">
    <property type="term" value="P:photosynthesis, light reaction"/>
    <property type="evidence" value="ECO:0007669"/>
    <property type="project" value="UniProtKB-UniRule"/>
</dbReference>
<dbReference type="HAMAP" id="MF_00445">
    <property type="entry name" value="NDH1_NuoN_1"/>
    <property type="match status" value="1"/>
</dbReference>
<dbReference type="InterPro" id="IPR010096">
    <property type="entry name" value="NADH-Q_OxRdtase_suN/2"/>
</dbReference>
<dbReference type="InterPro" id="IPR001750">
    <property type="entry name" value="ND/Mrp_TM"/>
</dbReference>
<dbReference type="InterPro" id="IPR045693">
    <property type="entry name" value="Ndh2_N"/>
</dbReference>
<dbReference type="NCBIfam" id="TIGR01770">
    <property type="entry name" value="NDH_I_N"/>
    <property type="match status" value="1"/>
</dbReference>
<dbReference type="NCBIfam" id="NF002701">
    <property type="entry name" value="PRK02504.1"/>
    <property type="match status" value="1"/>
</dbReference>
<dbReference type="PANTHER" id="PTHR22773">
    <property type="entry name" value="NADH DEHYDROGENASE"/>
    <property type="match status" value="1"/>
</dbReference>
<dbReference type="Pfam" id="PF19530">
    <property type="entry name" value="Ndh2_N"/>
    <property type="match status" value="1"/>
</dbReference>
<dbReference type="Pfam" id="PF00361">
    <property type="entry name" value="Proton_antipo_M"/>
    <property type="match status" value="1"/>
</dbReference>
<dbReference type="PRINTS" id="PR01434">
    <property type="entry name" value="NADHDHGNASE5"/>
</dbReference>
<name>NU2C1_CALFG</name>
<gene>
    <name evidence="1" type="primary">ndhB1</name>
</gene>
<reference key="1">
    <citation type="journal article" date="2003" name="Plant Syst. Evol.">
        <title>The chloroplast genome of the 'basal' angiosperm Calycanthus fertilis -- structural and phylogenetic analyses.</title>
        <authorList>
            <person name="Goremykin V."/>
            <person name="Hirsch-Ernst K.I."/>
            <person name="Woelfl S."/>
            <person name="Hellwig F.H."/>
        </authorList>
    </citation>
    <scope>NUCLEOTIDE SEQUENCE [LARGE SCALE GENOMIC DNA]</scope>
</reference>
<geneLocation type="chloroplast"/>
<feature type="chain" id="PRO_0000117658" description="NAD(P)H-quinone oxidoreductase subunit 2 A, chloroplastic">
    <location>
        <begin position="1"/>
        <end position="510"/>
    </location>
</feature>
<feature type="transmembrane region" description="Helical" evidence="1">
    <location>
        <begin position="24"/>
        <end position="44"/>
    </location>
</feature>
<feature type="transmembrane region" description="Helical" evidence="1">
    <location>
        <begin position="57"/>
        <end position="77"/>
    </location>
</feature>
<feature type="transmembrane region" description="Helical" evidence="1">
    <location>
        <begin position="99"/>
        <end position="119"/>
    </location>
</feature>
<feature type="transmembrane region" description="Helical" evidence="1">
    <location>
        <begin position="124"/>
        <end position="144"/>
    </location>
</feature>
<feature type="transmembrane region" description="Helical" evidence="1">
    <location>
        <begin position="183"/>
        <end position="203"/>
    </location>
</feature>
<feature type="transmembrane region" description="Helical" evidence="1">
    <location>
        <begin position="227"/>
        <end position="247"/>
    </location>
</feature>
<feature type="transmembrane region" description="Helical" evidence="1">
    <location>
        <begin position="295"/>
        <end position="315"/>
    </location>
</feature>
<feature type="transmembrane region" description="Helical" evidence="1">
    <location>
        <begin position="323"/>
        <end position="343"/>
    </location>
</feature>
<feature type="transmembrane region" description="Helical" evidence="1">
    <location>
        <begin position="347"/>
        <end position="367"/>
    </location>
</feature>
<feature type="transmembrane region" description="Helical" evidence="1">
    <location>
        <begin position="395"/>
        <end position="415"/>
    </location>
</feature>
<feature type="transmembrane region" description="Helical" evidence="1">
    <location>
        <begin position="418"/>
        <end position="438"/>
    </location>
</feature>
<feature type="transmembrane region" description="Helical" evidence="1">
    <location>
        <begin position="484"/>
        <end position="504"/>
    </location>
</feature>
<organism>
    <name type="scientific">Calycanthus floridus var. glaucus</name>
    <name type="common">Eastern sweetshrub</name>
    <name type="synonym">Calycanthus fertilis var. ferax</name>
    <dbReference type="NCBI Taxonomy" id="212734"/>
    <lineage>
        <taxon>Eukaryota</taxon>
        <taxon>Viridiplantae</taxon>
        <taxon>Streptophyta</taxon>
        <taxon>Embryophyta</taxon>
        <taxon>Tracheophyta</taxon>
        <taxon>Spermatophyta</taxon>
        <taxon>Magnoliopsida</taxon>
        <taxon>Magnoliidae</taxon>
        <taxon>Laurales</taxon>
        <taxon>Calycanthaceae</taxon>
        <taxon>Calycanthus</taxon>
    </lineage>
</organism>
<protein>
    <recommendedName>
        <fullName evidence="1">NAD(P)H-quinone oxidoreductase subunit 2 A, chloroplastic</fullName>
        <ecNumber evidence="1">7.1.1.-</ecNumber>
    </recommendedName>
    <alternativeName>
        <fullName evidence="1">NAD(P)H dehydrogenase, subunit 2 A</fullName>
    </alternativeName>
    <alternativeName>
        <fullName evidence="1">NADH-plastoquinone oxidoreductase subunit 2 A</fullName>
    </alternativeName>
</protein>